<sequence length="511" mass="55448">MNAAFQQPVTDSKTGDAPAILEMRGISQIFPGVKALDNVSIALHPGTVTALIGENGAGKSTLVKILTGIYRPNEGEILVDGQPTSFASAQAAIDAGVTAIHQETVLFDELTVAENIFLGHAPRTRLRTIDWQTMNSRSKTLLTALESNIDPTIRLKDLSIAQRHLVAIARALSIEARIVIMDEPTAALSRKEIDDLFRIVRGLKDQGKAILFISHKFDELYEIADDFVVFRDGRAVGQGRLKETPQDEIVRMMVGRDVENVFPKIDVAIGGPVLEVEKYCHRTEFRDVSLTLRRGEILGIYGLIGAGRSELAQSLFGVTKPLSGRLTLEGREISINSPHDAIKAGIVYVPEERGRHGLALPMPIYQNMTLPSLARTSRKGFLKAAEEFALARKYAERLDLRAAALSVPVGTLSGGNQQKVVIGKWLATMPKVIILDEPTKGIDIGSKAAVHGFISELAAEGLSIIMISSELPEIIGMSDRVLVMKEGLSVGLFERDQLSPEALVRAATGNA</sequence>
<evidence type="ECO:0000255" key="1">
    <source>
        <dbReference type="HAMAP-Rule" id="MF_01716"/>
    </source>
</evidence>
<accession>Q2K0S7</accession>
<name>RBSA3_RHIEC</name>
<feature type="chain" id="PRO_0000261082" description="Ribose import ATP-binding protein RbsA 3">
    <location>
        <begin position="1"/>
        <end position="511"/>
    </location>
</feature>
<feature type="domain" description="ABC transporter 1" evidence="1">
    <location>
        <begin position="21"/>
        <end position="257"/>
    </location>
</feature>
<feature type="domain" description="ABC transporter 2" evidence="1">
    <location>
        <begin position="256"/>
        <end position="511"/>
    </location>
</feature>
<feature type="binding site" evidence="1">
    <location>
        <begin position="53"/>
        <end position="60"/>
    </location>
    <ligand>
        <name>ATP</name>
        <dbReference type="ChEBI" id="CHEBI:30616"/>
    </ligand>
</feature>
<dbReference type="EC" id="7.5.2.7" evidence="1"/>
<dbReference type="EMBL" id="CP000137">
    <property type="protein sequence ID" value="ABC93723.1"/>
    <property type="molecule type" value="Genomic_DNA"/>
</dbReference>
<dbReference type="RefSeq" id="WP_011428142.1">
    <property type="nucleotide sequence ID" value="NC_007765.1"/>
</dbReference>
<dbReference type="SMR" id="Q2K0S7"/>
<dbReference type="KEGG" id="ret:RHE_PE00288"/>
<dbReference type="HOGENOM" id="CLU_000604_92_3_5"/>
<dbReference type="OrthoDB" id="9805029at2"/>
<dbReference type="Proteomes" id="UP000001936">
    <property type="component" value="Plasmid p42e"/>
</dbReference>
<dbReference type="GO" id="GO:0005886">
    <property type="term" value="C:plasma membrane"/>
    <property type="evidence" value="ECO:0007669"/>
    <property type="project" value="UniProtKB-SubCell"/>
</dbReference>
<dbReference type="GO" id="GO:0015611">
    <property type="term" value="F:ABC-type D-ribose transporter activity"/>
    <property type="evidence" value="ECO:0007669"/>
    <property type="project" value="UniProtKB-EC"/>
</dbReference>
<dbReference type="GO" id="GO:0005524">
    <property type="term" value="F:ATP binding"/>
    <property type="evidence" value="ECO:0007669"/>
    <property type="project" value="UniProtKB-KW"/>
</dbReference>
<dbReference type="GO" id="GO:0016887">
    <property type="term" value="F:ATP hydrolysis activity"/>
    <property type="evidence" value="ECO:0007669"/>
    <property type="project" value="InterPro"/>
</dbReference>
<dbReference type="CDD" id="cd03216">
    <property type="entry name" value="ABC_Carb_Monos_I"/>
    <property type="match status" value="1"/>
</dbReference>
<dbReference type="CDD" id="cd03215">
    <property type="entry name" value="ABC_Carb_Monos_II"/>
    <property type="match status" value="1"/>
</dbReference>
<dbReference type="FunFam" id="3.40.50.300:FF:000127">
    <property type="entry name" value="Ribose import ATP-binding protein RbsA"/>
    <property type="match status" value="1"/>
</dbReference>
<dbReference type="Gene3D" id="3.40.50.300">
    <property type="entry name" value="P-loop containing nucleotide triphosphate hydrolases"/>
    <property type="match status" value="2"/>
</dbReference>
<dbReference type="InterPro" id="IPR003593">
    <property type="entry name" value="AAA+_ATPase"/>
</dbReference>
<dbReference type="InterPro" id="IPR050107">
    <property type="entry name" value="ABC_carbohydrate_import_ATPase"/>
</dbReference>
<dbReference type="InterPro" id="IPR003439">
    <property type="entry name" value="ABC_transporter-like_ATP-bd"/>
</dbReference>
<dbReference type="InterPro" id="IPR017871">
    <property type="entry name" value="ABC_transporter-like_CS"/>
</dbReference>
<dbReference type="InterPro" id="IPR027417">
    <property type="entry name" value="P-loop_NTPase"/>
</dbReference>
<dbReference type="PANTHER" id="PTHR43790">
    <property type="entry name" value="CARBOHYDRATE TRANSPORT ATP-BINDING PROTEIN MG119-RELATED"/>
    <property type="match status" value="1"/>
</dbReference>
<dbReference type="PANTHER" id="PTHR43790:SF3">
    <property type="entry name" value="D-ALLOSE IMPORT ATP-BINDING PROTEIN ALSA-RELATED"/>
    <property type="match status" value="1"/>
</dbReference>
<dbReference type="Pfam" id="PF00005">
    <property type="entry name" value="ABC_tran"/>
    <property type="match status" value="2"/>
</dbReference>
<dbReference type="SMART" id="SM00382">
    <property type="entry name" value="AAA"/>
    <property type="match status" value="2"/>
</dbReference>
<dbReference type="SUPFAM" id="SSF52540">
    <property type="entry name" value="P-loop containing nucleoside triphosphate hydrolases"/>
    <property type="match status" value="2"/>
</dbReference>
<dbReference type="PROSITE" id="PS00211">
    <property type="entry name" value="ABC_TRANSPORTER_1"/>
    <property type="match status" value="1"/>
</dbReference>
<dbReference type="PROSITE" id="PS50893">
    <property type="entry name" value="ABC_TRANSPORTER_2"/>
    <property type="match status" value="2"/>
</dbReference>
<dbReference type="PROSITE" id="PS51254">
    <property type="entry name" value="RBSA"/>
    <property type="match status" value="1"/>
</dbReference>
<proteinExistence type="inferred from homology"/>
<protein>
    <recommendedName>
        <fullName evidence="1">Ribose import ATP-binding protein RbsA 3</fullName>
        <ecNumber evidence="1">7.5.2.7</ecNumber>
    </recommendedName>
</protein>
<keyword id="KW-0067">ATP-binding</keyword>
<keyword id="KW-0997">Cell inner membrane</keyword>
<keyword id="KW-1003">Cell membrane</keyword>
<keyword id="KW-0472">Membrane</keyword>
<keyword id="KW-0547">Nucleotide-binding</keyword>
<keyword id="KW-0614">Plasmid</keyword>
<keyword id="KW-1185">Reference proteome</keyword>
<keyword id="KW-0677">Repeat</keyword>
<keyword id="KW-0762">Sugar transport</keyword>
<keyword id="KW-1278">Translocase</keyword>
<keyword id="KW-0813">Transport</keyword>
<comment type="function">
    <text evidence="1">Part of the ABC transporter complex RbsABC involved in ribose import. Responsible for energy coupling to the transport system.</text>
</comment>
<comment type="catalytic activity">
    <reaction evidence="1">
        <text>D-ribose(out) + ATP + H2O = D-ribose(in) + ADP + phosphate + H(+)</text>
        <dbReference type="Rhea" id="RHEA:29903"/>
        <dbReference type="ChEBI" id="CHEBI:15377"/>
        <dbReference type="ChEBI" id="CHEBI:15378"/>
        <dbReference type="ChEBI" id="CHEBI:30616"/>
        <dbReference type="ChEBI" id="CHEBI:43474"/>
        <dbReference type="ChEBI" id="CHEBI:47013"/>
        <dbReference type="ChEBI" id="CHEBI:456216"/>
        <dbReference type="EC" id="7.5.2.7"/>
    </reaction>
</comment>
<comment type="subunit">
    <text evidence="1">The complex is composed of an ATP-binding protein (RbsA), two transmembrane proteins (RbsC) and a solute-binding protein (RbsB).</text>
</comment>
<comment type="subcellular location">
    <subcellularLocation>
        <location evidence="1">Cell inner membrane</location>
        <topology evidence="1">Peripheral membrane protein</topology>
    </subcellularLocation>
</comment>
<comment type="similarity">
    <text evidence="1">Belongs to the ABC transporter superfamily. Ribose importer (TC 3.A.1.2.1) family.</text>
</comment>
<reference key="1">
    <citation type="journal article" date="2006" name="Proc. Natl. Acad. Sci. U.S.A.">
        <title>The partitioned Rhizobium etli genome: genetic and metabolic redundancy in seven interacting replicons.</title>
        <authorList>
            <person name="Gonzalez V."/>
            <person name="Santamaria R.I."/>
            <person name="Bustos P."/>
            <person name="Hernandez-Gonzalez I."/>
            <person name="Medrano-Soto A."/>
            <person name="Moreno-Hagelsieb G."/>
            <person name="Janga S.C."/>
            <person name="Ramirez M.A."/>
            <person name="Jimenez-Jacinto V."/>
            <person name="Collado-Vides J."/>
            <person name="Davila G."/>
        </authorList>
    </citation>
    <scope>NUCLEOTIDE SEQUENCE [LARGE SCALE GENOMIC DNA]</scope>
    <source>
        <strain>ATCC 51251 / DSM 11541 / JCM 21823 / NBRC 15573 / CFN 42</strain>
    </source>
</reference>
<organism>
    <name type="scientific">Rhizobium etli (strain ATCC 51251 / DSM 11541 / JCM 21823 / NBRC 15573 / CFN 42)</name>
    <dbReference type="NCBI Taxonomy" id="347834"/>
    <lineage>
        <taxon>Bacteria</taxon>
        <taxon>Pseudomonadati</taxon>
        <taxon>Pseudomonadota</taxon>
        <taxon>Alphaproteobacteria</taxon>
        <taxon>Hyphomicrobiales</taxon>
        <taxon>Rhizobiaceae</taxon>
        <taxon>Rhizobium/Agrobacterium group</taxon>
        <taxon>Rhizobium</taxon>
    </lineage>
</organism>
<gene>
    <name evidence="1" type="primary">rbsA3</name>
    <name type="ordered locus">RHE_PE00288</name>
</gene>
<geneLocation type="plasmid">
    <name>p42e</name>
</geneLocation>